<accession>A8HYT3</accession>
<evidence type="ECO:0000255" key="1">
    <source>
        <dbReference type="HAMAP-Rule" id="MF_01020"/>
    </source>
</evidence>
<sequence>MSEDRVTLADLERIVAARAQADAGASYTRSLLDKGISKCAQKLGEEAVETALAAVGSDKAAVISETADLLYHLAVLLHAKGVELDEVHAELARRTRQSGHEEKASRQRS</sequence>
<name>HIS2_AZOC5</name>
<organism>
    <name type="scientific">Azorhizobium caulinodans (strain ATCC 43989 / DSM 5975 / JCM 20966 / LMG 6465 / NBRC 14845 / NCIMB 13405 / ORS 571)</name>
    <dbReference type="NCBI Taxonomy" id="438753"/>
    <lineage>
        <taxon>Bacteria</taxon>
        <taxon>Pseudomonadati</taxon>
        <taxon>Pseudomonadota</taxon>
        <taxon>Alphaproteobacteria</taxon>
        <taxon>Hyphomicrobiales</taxon>
        <taxon>Xanthobacteraceae</taxon>
        <taxon>Azorhizobium</taxon>
    </lineage>
</organism>
<proteinExistence type="inferred from homology"/>
<keyword id="KW-0028">Amino-acid biosynthesis</keyword>
<keyword id="KW-0067">ATP-binding</keyword>
<keyword id="KW-0963">Cytoplasm</keyword>
<keyword id="KW-0368">Histidine biosynthesis</keyword>
<keyword id="KW-0378">Hydrolase</keyword>
<keyword id="KW-0547">Nucleotide-binding</keyword>
<keyword id="KW-1185">Reference proteome</keyword>
<comment type="catalytic activity">
    <reaction evidence="1">
        <text>1-(5-phospho-beta-D-ribosyl)-ATP + H2O = 1-(5-phospho-beta-D-ribosyl)-5'-AMP + diphosphate + H(+)</text>
        <dbReference type="Rhea" id="RHEA:22828"/>
        <dbReference type="ChEBI" id="CHEBI:15377"/>
        <dbReference type="ChEBI" id="CHEBI:15378"/>
        <dbReference type="ChEBI" id="CHEBI:33019"/>
        <dbReference type="ChEBI" id="CHEBI:59457"/>
        <dbReference type="ChEBI" id="CHEBI:73183"/>
        <dbReference type="EC" id="3.6.1.31"/>
    </reaction>
</comment>
<comment type="pathway">
    <text evidence="1">Amino-acid biosynthesis; L-histidine biosynthesis; L-histidine from 5-phospho-alpha-D-ribose 1-diphosphate: step 2/9.</text>
</comment>
<comment type="subcellular location">
    <subcellularLocation>
        <location evidence="1">Cytoplasm</location>
    </subcellularLocation>
</comment>
<comment type="similarity">
    <text evidence="1">Belongs to the PRA-PH family.</text>
</comment>
<feature type="chain" id="PRO_0000319639" description="Phosphoribosyl-ATP pyrophosphatase">
    <location>
        <begin position="1"/>
        <end position="109"/>
    </location>
</feature>
<reference key="1">
    <citation type="submission" date="2007-04" db="EMBL/GenBank/DDBJ databases">
        <title>Complete genome sequence of the nitrogen-fixing bacterium Azorhizobium caulinodans ORS571.</title>
        <authorList>
            <person name="Lee K.B."/>
            <person name="Backer P.D."/>
            <person name="Aono T."/>
            <person name="Liu C.T."/>
            <person name="Suzuki S."/>
            <person name="Suzuki T."/>
            <person name="Kaneko T."/>
            <person name="Yamada M."/>
            <person name="Tabata S."/>
            <person name="Kupfer D.M."/>
            <person name="Najar F.Z."/>
            <person name="Wiley G.B."/>
            <person name="Roe B."/>
            <person name="Binnewies T."/>
            <person name="Ussery D."/>
            <person name="Vereecke D."/>
            <person name="Gevers D."/>
            <person name="Holsters M."/>
            <person name="Oyaizu H."/>
        </authorList>
    </citation>
    <scope>NUCLEOTIDE SEQUENCE [LARGE SCALE GENOMIC DNA]</scope>
    <source>
        <strain>ATCC 43989 / DSM 5975 / JCM 20966 / LMG 6465 / NBRC 14845 / NCIMB 13405 / ORS 571</strain>
    </source>
</reference>
<gene>
    <name evidence="1" type="primary">hisE</name>
    <name type="ordered locus">AZC_4497</name>
</gene>
<protein>
    <recommendedName>
        <fullName evidence="1">Phosphoribosyl-ATP pyrophosphatase</fullName>
        <shortName evidence="1">PRA-PH</shortName>
        <ecNumber evidence="1">3.6.1.31</ecNumber>
    </recommendedName>
</protein>
<dbReference type="EC" id="3.6.1.31" evidence="1"/>
<dbReference type="EMBL" id="AP009384">
    <property type="protein sequence ID" value="BAF90495.1"/>
    <property type="molecule type" value="Genomic_DNA"/>
</dbReference>
<dbReference type="RefSeq" id="WP_012173016.1">
    <property type="nucleotide sequence ID" value="NC_009937.1"/>
</dbReference>
<dbReference type="SMR" id="A8HYT3"/>
<dbReference type="STRING" id="438753.AZC_4497"/>
<dbReference type="KEGG" id="azc:AZC_4497"/>
<dbReference type="eggNOG" id="COG0140">
    <property type="taxonomic scope" value="Bacteria"/>
</dbReference>
<dbReference type="HOGENOM" id="CLU_123337_0_0_5"/>
<dbReference type="UniPathway" id="UPA00031">
    <property type="reaction ID" value="UER00007"/>
</dbReference>
<dbReference type="Proteomes" id="UP000000270">
    <property type="component" value="Chromosome"/>
</dbReference>
<dbReference type="GO" id="GO:0005737">
    <property type="term" value="C:cytoplasm"/>
    <property type="evidence" value="ECO:0007669"/>
    <property type="project" value="UniProtKB-SubCell"/>
</dbReference>
<dbReference type="GO" id="GO:0005524">
    <property type="term" value="F:ATP binding"/>
    <property type="evidence" value="ECO:0007669"/>
    <property type="project" value="UniProtKB-KW"/>
</dbReference>
<dbReference type="GO" id="GO:0004636">
    <property type="term" value="F:phosphoribosyl-ATP diphosphatase activity"/>
    <property type="evidence" value="ECO:0007669"/>
    <property type="project" value="UniProtKB-UniRule"/>
</dbReference>
<dbReference type="GO" id="GO:0000105">
    <property type="term" value="P:L-histidine biosynthetic process"/>
    <property type="evidence" value="ECO:0007669"/>
    <property type="project" value="UniProtKB-UniRule"/>
</dbReference>
<dbReference type="CDD" id="cd11534">
    <property type="entry name" value="NTP-PPase_HisIE_like"/>
    <property type="match status" value="1"/>
</dbReference>
<dbReference type="Gene3D" id="1.10.287.1080">
    <property type="entry name" value="MazG-like"/>
    <property type="match status" value="1"/>
</dbReference>
<dbReference type="HAMAP" id="MF_01020">
    <property type="entry name" value="HisE"/>
    <property type="match status" value="1"/>
</dbReference>
<dbReference type="InterPro" id="IPR008179">
    <property type="entry name" value="HisE"/>
</dbReference>
<dbReference type="InterPro" id="IPR021130">
    <property type="entry name" value="PRib-ATP_PPHydrolase-like"/>
</dbReference>
<dbReference type="NCBIfam" id="TIGR03188">
    <property type="entry name" value="histidine_hisI"/>
    <property type="match status" value="1"/>
</dbReference>
<dbReference type="NCBIfam" id="NF001613">
    <property type="entry name" value="PRK00400.1-5"/>
    <property type="match status" value="1"/>
</dbReference>
<dbReference type="PANTHER" id="PTHR42945">
    <property type="entry name" value="HISTIDINE BIOSYNTHESIS BIFUNCTIONAL PROTEIN"/>
    <property type="match status" value="1"/>
</dbReference>
<dbReference type="PANTHER" id="PTHR42945:SF9">
    <property type="entry name" value="HISTIDINE BIOSYNTHESIS BIFUNCTIONAL PROTEIN HISIE"/>
    <property type="match status" value="1"/>
</dbReference>
<dbReference type="Pfam" id="PF01503">
    <property type="entry name" value="PRA-PH"/>
    <property type="match status" value="1"/>
</dbReference>
<dbReference type="SUPFAM" id="SSF101386">
    <property type="entry name" value="all-alpha NTP pyrophosphatases"/>
    <property type="match status" value="1"/>
</dbReference>